<protein>
    <recommendedName>
        <fullName evidence="1">UPF0154 protein lhv_1362</fullName>
    </recommendedName>
</protein>
<name>Y1362_LACH4</name>
<organism>
    <name type="scientific">Lactobacillus helveticus (strain DPC 4571)</name>
    <dbReference type="NCBI Taxonomy" id="405566"/>
    <lineage>
        <taxon>Bacteria</taxon>
        <taxon>Bacillati</taxon>
        <taxon>Bacillota</taxon>
        <taxon>Bacilli</taxon>
        <taxon>Lactobacillales</taxon>
        <taxon>Lactobacillaceae</taxon>
        <taxon>Lactobacillus</taxon>
    </lineage>
</organism>
<reference key="1">
    <citation type="journal article" date="2008" name="J. Bacteriol.">
        <title>Genome sequence of Lactobacillus helveticus: an organism distinguished by selective gene loss and IS element expansion.</title>
        <authorList>
            <person name="Callanan M."/>
            <person name="Kaleta P."/>
            <person name="O'Callaghan J."/>
            <person name="O'Sullivan O."/>
            <person name="Jordan K."/>
            <person name="McAuliffe O."/>
            <person name="Sangrador-Vegas A."/>
            <person name="Slattery L."/>
            <person name="Fitzgerald G.F."/>
            <person name="Beresford T."/>
            <person name="Ross R.P."/>
        </authorList>
    </citation>
    <scope>NUCLEOTIDE SEQUENCE [LARGE SCALE GENOMIC DNA]</scope>
    <source>
        <strain>DPC 4571</strain>
    </source>
</reference>
<accession>A8YVS5</accession>
<gene>
    <name type="ordered locus">lhv_1362</name>
</gene>
<feature type="chain" id="PRO_1000072094" description="UPF0154 protein lhv_1362">
    <location>
        <begin position="1"/>
        <end position="72"/>
    </location>
</feature>
<feature type="transmembrane region" description="Helical" evidence="1">
    <location>
        <begin position="3"/>
        <end position="23"/>
    </location>
</feature>
<dbReference type="EMBL" id="CP000517">
    <property type="protein sequence ID" value="ABX27360.1"/>
    <property type="molecule type" value="Genomic_DNA"/>
</dbReference>
<dbReference type="RefSeq" id="WP_012212011.1">
    <property type="nucleotide sequence ID" value="NC_010080.1"/>
</dbReference>
<dbReference type="SMR" id="A8YVS5"/>
<dbReference type="KEGG" id="lhe:lhv_1362"/>
<dbReference type="eggNOG" id="COG3763">
    <property type="taxonomic scope" value="Bacteria"/>
</dbReference>
<dbReference type="HOGENOM" id="CLU_180108_0_1_9"/>
<dbReference type="Proteomes" id="UP000000790">
    <property type="component" value="Chromosome"/>
</dbReference>
<dbReference type="GO" id="GO:0005886">
    <property type="term" value="C:plasma membrane"/>
    <property type="evidence" value="ECO:0007669"/>
    <property type="project" value="UniProtKB-SubCell"/>
</dbReference>
<dbReference type="HAMAP" id="MF_00363">
    <property type="entry name" value="UPF0154"/>
    <property type="match status" value="1"/>
</dbReference>
<dbReference type="InterPro" id="IPR005359">
    <property type="entry name" value="UPF0154"/>
</dbReference>
<dbReference type="Pfam" id="PF03672">
    <property type="entry name" value="UPF0154"/>
    <property type="match status" value="1"/>
</dbReference>
<keyword id="KW-1003">Cell membrane</keyword>
<keyword id="KW-0472">Membrane</keyword>
<keyword id="KW-0812">Transmembrane</keyword>
<keyword id="KW-1133">Transmembrane helix</keyword>
<evidence type="ECO:0000255" key="1">
    <source>
        <dbReference type="HAMAP-Rule" id="MF_00363"/>
    </source>
</evidence>
<proteinExistence type="inferred from homology"/>
<sequence>MNLGLAIFLIIIALLVGAVAGFYGARAYMKKYFKENPPISEDMIVAMMSQMGQKPSNKKVHQVMNMMKHQQK</sequence>
<comment type="subcellular location">
    <subcellularLocation>
        <location evidence="1">Cell membrane</location>
        <topology evidence="1">Single-pass membrane protein</topology>
    </subcellularLocation>
</comment>
<comment type="similarity">
    <text evidence="1">Belongs to the UPF0154 family.</text>
</comment>